<dbReference type="EMBL" id="AC005970">
    <property type="protein sequence ID" value="AAC95174.1"/>
    <property type="molecule type" value="Genomic_DNA"/>
</dbReference>
<dbReference type="EMBL" id="CP002685">
    <property type="protein sequence ID" value="AEC05987.1"/>
    <property type="molecule type" value="Genomic_DNA"/>
</dbReference>
<dbReference type="PIR" id="F84473">
    <property type="entry name" value="F84473"/>
</dbReference>
<dbReference type="RefSeq" id="NP_178654.1">
    <property type="nucleotide sequence ID" value="NM_126610.1"/>
</dbReference>
<dbReference type="SMR" id="Q9ZUF1"/>
<dbReference type="FunCoup" id="Q9ZUF1">
    <property type="interactions" value="35"/>
</dbReference>
<dbReference type="PaxDb" id="3702-AT2G05970.1"/>
<dbReference type="EnsemblPlants" id="AT2G05970.1">
    <property type="protein sequence ID" value="AT2G05970.1"/>
    <property type="gene ID" value="AT2G05970"/>
</dbReference>
<dbReference type="GeneID" id="815150"/>
<dbReference type="Gramene" id="AT2G05970.1">
    <property type="protein sequence ID" value="AT2G05970.1"/>
    <property type="gene ID" value="AT2G05970"/>
</dbReference>
<dbReference type="KEGG" id="ath:AT2G05970"/>
<dbReference type="Araport" id="AT2G05970"/>
<dbReference type="TAIR" id="AT2G05970">
    <property type="gene designation" value="ATFDB12"/>
</dbReference>
<dbReference type="eggNOG" id="ENOG502R78J">
    <property type="taxonomic scope" value="Eukaryota"/>
</dbReference>
<dbReference type="HOGENOM" id="CLU_019286_7_1_1"/>
<dbReference type="InParanoid" id="Q9ZUF1"/>
<dbReference type="OMA" id="ACLWIDK"/>
<dbReference type="PhylomeDB" id="Q9ZUF1"/>
<dbReference type="PRO" id="PR:Q9ZUF1"/>
<dbReference type="Proteomes" id="UP000006548">
    <property type="component" value="Chromosome 2"/>
</dbReference>
<dbReference type="ExpressionAtlas" id="Q9ZUF1">
    <property type="expression patterns" value="baseline and differential"/>
</dbReference>
<dbReference type="CDD" id="cd09917">
    <property type="entry name" value="F-box_SF"/>
    <property type="match status" value="1"/>
</dbReference>
<dbReference type="Gene3D" id="1.20.1280.50">
    <property type="match status" value="1"/>
</dbReference>
<dbReference type="InterPro" id="IPR036047">
    <property type="entry name" value="F-box-like_dom_sf"/>
</dbReference>
<dbReference type="InterPro" id="IPR050942">
    <property type="entry name" value="F-box_BR-signaling"/>
</dbReference>
<dbReference type="InterPro" id="IPR001810">
    <property type="entry name" value="F-box_dom"/>
</dbReference>
<dbReference type="InterPro" id="IPR005174">
    <property type="entry name" value="KIB1-4_b-propeller"/>
</dbReference>
<dbReference type="PANTHER" id="PTHR44259:SF14">
    <property type="entry name" value="F-BOX DOMAIN-CONTAINING PROTEIN"/>
    <property type="match status" value="1"/>
</dbReference>
<dbReference type="PANTHER" id="PTHR44259">
    <property type="entry name" value="OS07G0183000 PROTEIN-RELATED"/>
    <property type="match status" value="1"/>
</dbReference>
<dbReference type="Pfam" id="PF03478">
    <property type="entry name" value="Beta-prop_KIB1-4"/>
    <property type="match status" value="1"/>
</dbReference>
<dbReference type="Pfam" id="PF00646">
    <property type="entry name" value="F-box"/>
    <property type="match status" value="1"/>
</dbReference>
<dbReference type="SMART" id="SM00256">
    <property type="entry name" value="FBOX"/>
    <property type="match status" value="1"/>
</dbReference>
<dbReference type="SUPFAM" id="SSF81383">
    <property type="entry name" value="F-box domain"/>
    <property type="match status" value="1"/>
</dbReference>
<sequence length="377" mass="44208">MIETNKKASWSELCPDVLRCVFELLSFSDLNRTRSVCSSWHSASRHCVPTQNQIPWLILFPRNNVNNNNNNSCVLFVPDDRDSLYKTKDLGVGFMLSNCLATYGSWILMMDRLCNLNILNPLTGEKIDLPRTKFDLPRLESSVACLWIDEKTKDYIVVWKIKNSLVYAKKGNHTWQQVFSMNEELSVEQIVYEHKTQKLYVHFNDSTLSIWRLSREDPHGVFENYIPFDFVFQDFLPDRRTDEELYVKEYIDTRLNIALTTSGELLKVASVVQKSKRWLFRIYKMNYIKRRWERIESLGDEALILDMGITIVAKDIPGLKRNSIYISGFDYGRKHLDHIFIFDLTTQESEPLPYCVSSSNDFSDARWFFPSFSQSPY</sequence>
<keyword id="KW-1185">Reference proteome</keyword>
<name>FB99_ARATH</name>
<proteinExistence type="evidence at transcript level"/>
<gene>
    <name type="ordered locus">At2g05970</name>
    <name type="ORF">T6P5.17</name>
</gene>
<organism>
    <name type="scientific">Arabidopsis thaliana</name>
    <name type="common">Mouse-ear cress</name>
    <dbReference type="NCBI Taxonomy" id="3702"/>
    <lineage>
        <taxon>Eukaryota</taxon>
        <taxon>Viridiplantae</taxon>
        <taxon>Streptophyta</taxon>
        <taxon>Embryophyta</taxon>
        <taxon>Tracheophyta</taxon>
        <taxon>Spermatophyta</taxon>
        <taxon>Magnoliopsida</taxon>
        <taxon>eudicotyledons</taxon>
        <taxon>Gunneridae</taxon>
        <taxon>Pentapetalae</taxon>
        <taxon>rosids</taxon>
        <taxon>malvids</taxon>
        <taxon>Brassicales</taxon>
        <taxon>Brassicaceae</taxon>
        <taxon>Camelineae</taxon>
        <taxon>Arabidopsis</taxon>
    </lineage>
</organism>
<accession>Q9ZUF1</accession>
<protein>
    <recommendedName>
        <fullName>F-box protein At2g05970</fullName>
    </recommendedName>
</protein>
<feature type="chain" id="PRO_0000283372" description="F-box protein At2g05970">
    <location>
        <begin position="1"/>
        <end position="377"/>
    </location>
</feature>
<feature type="domain" description="F-box">
    <location>
        <begin position="8"/>
        <end position="55"/>
    </location>
</feature>
<reference key="1">
    <citation type="journal article" date="1999" name="Nature">
        <title>Sequence and analysis of chromosome 2 of the plant Arabidopsis thaliana.</title>
        <authorList>
            <person name="Lin X."/>
            <person name="Kaul S."/>
            <person name="Rounsley S.D."/>
            <person name="Shea T.P."/>
            <person name="Benito M.-I."/>
            <person name="Town C.D."/>
            <person name="Fujii C.Y."/>
            <person name="Mason T.M."/>
            <person name="Bowman C.L."/>
            <person name="Barnstead M.E."/>
            <person name="Feldblyum T.V."/>
            <person name="Buell C.R."/>
            <person name="Ketchum K.A."/>
            <person name="Lee J.J."/>
            <person name="Ronning C.M."/>
            <person name="Koo H.L."/>
            <person name="Moffat K.S."/>
            <person name="Cronin L.A."/>
            <person name="Shen M."/>
            <person name="Pai G."/>
            <person name="Van Aken S."/>
            <person name="Umayam L."/>
            <person name="Tallon L.J."/>
            <person name="Gill J.E."/>
            <person name="Adams M.D."/>
            <person name="Carrera A.J."/>
            <person name="Creasy T.H."/>
            <person name="Goodman H.M."/>
            <person name="Somerville C.R."/>
            <person name="Copenhaver G.P."/>
            <person name="Preuss D."/>
            <person name="Nierman W.C."/>
            <person name="White O."/>
            <person name="Eisen J.A."/>
            <person name="Salzberg S.L."/>
            <person name="Fraser C.M."/>
            <person name="Venter J.C."/>
        </authorList>
    </citation>
    <scope>NUCLEOTIDE SEQUENCE [LARGE SCALE GENOMIC DNA]</scope>
    <source>
        <strain>cv. Columbia</strain>
    </source>
</reference>
<reference key="2">
    <citation type="journal article" date="2017" name="Plant J.">
        <title>Araport11: a complete reannotation of the Arabidopsis thaliana reference genome.</title>
        <authorList>
            <person name="Cheng C.Y."/>
            <person name="Krishnakumar V."/>
            <person name="Chan A.P."/>
            <person name="Thibaud-Nissen F."/>
            <person name="Schobel S."/>
            <person name="Town C.D."/>
        </authorList>
    </citation>
    <scope>GENOME REANNOTATION</scope>
    <source>
        <strain>cv. Columbia</strain>
    </source>
</reference>